<name>YK026_HUMAN</name>
<dbReference type="EMBL" id="AK123849">
    <property type="protein sequence ID" value="BAC85707.1"/>
    <property type="molecule type" value="mRNA"/>
</dbReference>
<dbReference type="EMBL" id="BX641055">
    <property type="protein sequence ID" value="CAH10550.1"/>
    <property type="molecule type" value="mRNA"/>
</dbReference>
<dbReference type="BioMuta" id="-"/>
<dbReference type="AGR" id="HGNC:32326"/>
<dbReference type="neXtProt" id="NX_Q6AWC8"/>
<dbReference type="InParanoid" id="Q6AWC8"/>
<dbReference type="PAN-GO" id="Q6AWC8">
    <property type="GO annotations" value="0 GO annotations based on evolutionary models"/>
</dbReference>
<dbReference type="PathwayCommons" id="Q6AWC8"/>
<dbReference type="Pharos" id="Q6AWC8">
    <property type="development level" value="Tdark"/>
</dbReference>
<dbReference type="Proteomes" id="UP000005640">
    <property type="component" value="Unplaced"/>
</dbReference>
<dbReference type="RNAct" id="Q6AWC8">
    <property type="molecule type" value="protein"/>
</dbReference>
<accession>Q6AWC8</accession>
<accession>Q3KQW1</accession>
<accession>Q6ZW01</accession>
<keyword id="KW-1185">Reference proteome</keyword>
<feature type="chain" id="PRO_0000339308" description="Putative uncharacterized protein LOC100129027">
    <location>
        <begin position="1"/>
        <end position="147"/>
    </location>
</feature>
<feature type="sequence conflict" description="In Ref. 1; BAC85707." evidence="1" ref="1">
    <original>L</original>
    <variation>F</variation>
    <location>
        <position position="12"/>
    </location>
</feature>
<feature type="sequence conflict" description="In Ref. 1; BAC85707." evidence="1" ref="1">
    <original>P</original>
    <variation>S</variation>
    <location>
        <position position="63"/>
    </location>
</feature>
<protein>
    <recommendedName>
        <fullName>Putative uncharacterized protein LOC100129027</fullName>
    </recommendedName>
</protein>
<comment type="caution">
    <text evidence="1">Product of a dubious CDS prediction. Probable non-coding RNA.</text>
</comment>
<sequence>MYWQNWTHNGRLWGAGVHLYLSRKQCALKNTSLSKFQTSHICKGSALQPQQASPGASSFLTCPELGVMYLKLVLGQMVQAVRRDSGLQPFGSLFLLITQKRAVLTPFLTKTWHSLRALVYRVWSLEESRYLQREKGLVDSFGVLWEE</sequence>
<proteinExistence type="uncertain"/>
<evidence type="ECO:0000305" key="1"/>
<organism>
    <name type="scientific">Homo sapiens</name>
    <name type="common">Human</name>
    <dbReference type="NCBI Taxonomy" id="9606"/>
    <lineage>
        <taxon>Eukaryota</taxon>
        <taxon>Metazoa</taxon>
        <taxon>Chordata</taxon>
        <taxon>Craniata</taxon>
        <taxon>Vertebrata</taxon>
        <taxon>Euteleostomi</taxon>
        <taxon>Mammalia</taxon>
        <taxon>Eutheria</taxon>
        <taxon>Euarchontoglires</taxon>
        <taxon>Primates</taxon>
        <taxon>Haplorrhini</taxon>
        <taxon>Catarrhini</taxon>
        <taxon>Hominidae</taxon>
        <taxon>Homo</taxon>
    </lineage>
</organism>
<reference key="1">
    <citation type="journal article" date="2004" name="Nat. Genet.">
        <title>Complete sequencing and characterization of 21,243 full-length human cDNAs.</title>
        <authorList>
            <person name="Ota T."/>
            <person name="Suzuki Y."/>
            <person name="Nishikawa T."/>
            <person name="Otsuki T."/>
            <person name="Sugiyama T."/>
            <person name="Irie R."/>
            <person name="Wakamatsu A."/>
            <person name="Hayashi K."/>
            <person name="Sato H."/>
            <person name="Nagai K."/>
            <person name="Kimura K."/>
            <person name="Makita H."/>
            <person name="Sekine M."/>
            <person name="Obayashi M."/>
            <person name="Nishi T."/>
            <person name="Shibahara T."/>
            <person name="Tanaka T."/>
            <person name="Ishii S."/>
            <person name="Yamamoto J."/>
            <person name="Saito K."/>
            <person name="Kawai Y."/>
            <person name="Isono Y."/>
            <person name="Nakamura Y."/>
            <person name="Nagahari K."/>
            <person name="Murakami K."/>
            <person name="Yasuda T."/>
            <person name="Iwayanagi T."/>
            <person name="Wagatsuma M."/>
            <person name="Shiratori A."/>
            <person name="Sudo H."/>
            <person name="Hosoiri T."/>
            <person name="Kaku Y."/>
            <person name="Kodaira H."/>
            <person name="Kondo H."/>
            <person name="Sugawara M."/>
            <person name="Takahashi M."/>
            <person name="Kanda K."/>
            <person name="Yokoi T."/>
            <person name="Furuya T."/>
            <person name="Kikkawa E."/>
            <person name="Omura Y."/>
            <person name="Abe K."/>
            <person name="Kamihara K."/>
            <person name="Katsuta N."/>
            <person name="Sato K."/>
            <person name="Tanikawa M."/>
            <person name="Yamazaki M."/>
            <person name="Ninomiya K."/>
            <person name="Ishibashi T."/>
            <person name="Yamashita H."/>
            <person name="Murakawa K."/>
            <person name="Fujimori K."/>
            <person name="Tanai H."/>
            <person name="Kimata M."/>
            <person name="Watanabe M."/>
            <person name="Hiraoka S."/>
            <person name="Chiba Y."/>
            <person name="Ishida S."/>
            <person name="Ono Y."/>
            <person name="Takiguchi S."/>
            <person name="Watanabe S."/>
            <person name="Yosida M."/>
            <person name="Hotuta T."/>
            <person name="Kusano J."/>
            <person name="Kanehori K."/>
            <person name="Takahashi-Fujii A."/>
            <person name="Hara H."/>
            <person name="Tanase T.-O."/>
            <person name="Nomura Y."/>
            <person name="Togiya S."/>
            <person name="Komai F."/>
            <person name="Hara R."/>
            <person name="Takeuchi K."/>
            <person name="Arita M."/>
            <person name="Imose N."/>
            <person name="Musashino K."/>
            <person name="Yuuki H."/>
            <person name="Oshima A."/>
            <person name="Sasaki N."/>
            <person name="Aotsuka S."/>
            <person name="Yoshikawa Y."/>
            <person name="Matsunawa H."/>
            <person name="Ichihara T."/>
            <person name="Shiohata N."/>
            <person name="Sano S."/>
            <person name="Moriya S."/>
            <person name="Momiyama H."/>
            <person name="Satoh N."/>
            <person name="Takami S."/>
            <person name="Terashima Y."/>
            <person name="Suzuki O."/>
            <person name="Nakagawa S."/>
            <person name="Senoh A."/>
            <person name="Mizoguchi H."/>
            <person name="Goto Y."/>
            <person name="Shimizu F."/>
            <person name="Wakebe H."/>
            <person name="Hishigaki H."/>
            <person name="Watanabe T."/>
            <person name="Sugiyama A."/>
            <person name="Takemoto M."/>
            <person name="Kawakami B."/>
            <person name="Yamazaki M."/>
            <person name="Watanabe K."/>
            <person name="Kumagai A."/>
            <person name="Itakura S."/>
            <person name="Fukuzumi Y."/>
            <person name="Fujimori Y."/>
            <person name="Komiyama M."/>
            <person name="Tashiro H."/>
            <person name="Tanigami A."/>
            <person name="Fujiwara T."/>
            <person name="Ono T."/>
            <person name="Yamada K."/>
            <person name="Fujii Y."/>
            <person name="Ozaki K."/>
            <person name="Hirao M."/>
            <person name="Ohmori Y."/>
            <person name="Kawabata A."/>
            <person name="Hikiji T."/>
            <person name="Kobatake N."/>
            <person name="Inagaki H."/>
            <person name="Ikema Y."/>
            <person name="Okamoto S."/>
            <person name="Okitani R."/>
            <person name="Kawakami T."/>
            <person name="Noguchi S."/>
            <person name="Itoh T."/>
            <person name="Shigeta K."/>
            <person name="Senba T."/>
            <person name="Matsumura K."/>
            <person name="Nakajima Y."/>
            <person name="Mizuno T."/>
            <person name="Morinaga M."/>
            <person name="Sasaki M."/>
            <person name="Togashi T."/>
            <person name="Oyama M."/>
            <person name="Hata H."/>
            <person name="Watanabe M."/>
            <person name="Komatsu T."/>
            <person name="Mizushima-Sugano J."/>
            <person name="Satoh T."/>
            <person name="Shirai Y."/>
            <person name="Takahashi Y."/>
            <person name="Nakagawa K."/>
            <person name="Okumura K."/>
            <person name="Nagase T."/>
            <person name="Nomura N."/>
            <person name="Kikuchi H."/>
            <person name="Masuho Y."/>
            <person name="Yamashita R."/>
            <person name="Nakai K."/>
            <person name="Yada T."/>
            <person name="Nakamura Y."/>
            <person name="Ohara O."/>
            <person name="Isogai T."/>
            <person name="Sugano S."/>
        </authorList>
    </citation>
    <scope>NUCLEOTIDE SEQUENCE [LARGE SCALE MRNA]</scope>
</reference>
<reference key="2">
    <citation type="journal article" date="2007" name="BMC Genomics">
        <title>The full-ORF clone resource of the German cDNA consortium.</title>
        <authorList>
            <person name="Bechtel S."/>
            <person name="Rosenfelder H."/>
            <person name="Duda A."/>
            <person name="Schmidt C.P."/>
            <person name="Ernst U."/>
            <person name="Wellenreuther R."/>
            <person name="Mehrle A."/>
            <person name="Schuster C."/>
            <person name="Bahr A."/>
            <person name="Bloecker H."/>
            <person name="Heubner D."/>
            <person name="Hoerlein A."/>
            <person name="Michel G."/>
            <person name="Wedler H."/>
            <person name="Koehrer K."/>
            <person name="Ottenwaelder B."/>
            <person name="Poustka A."/>
            <person name="Wiemann S."/>
            <person name="Schupp I."/>
        </authorList>
    </citation>
    <scope>NUCLEOTIDE SEQUENCE [LARGE SCALE MRNA]</scope>
    <source>
        <tissue>Uterus</tissue>
    </source>
</reference>